<name>SYA_BRASO</name>
<evidence type="ECO:0000255" key="1">
    <source>
        <dbReference type="HAMAP-Rule" id="MF_00036"/>
    </source>
</evidence>
<comment type="function">
    <text evidence="1">Catalyzes the attachment of alanine to tRNA(Ala) in a two-step reaction: alanine is first activated by ATP to form Ala-AMP and then transferred to the acceptor end of tRNA(Ala). Also edits incorrectly charged Ser-tRNA(Ala) and Gly-tRNA(Ala) via its editing domain.</text>
</comment>
<comment type="catalytic activity">
    <reaction evidence="1">
        <text>tRNA(Ala) + L-alanine + ATP = L-alanyl-tRNA(Ala) + AMP + diphosphate</text>
        <dbReference type="Rhea" id="RHEA:12540"/>
        <dbReference type="Rhea" id="RHEA-COMP:9657"/>
        <dbReference type="Rhea" id="RHEA-COMP:9923"/>
        <dbReference type="ChEBI" id="CHEBI:30616"/>
        <dbReference type="ChEBI" id="CHEBI:33019"/>
        <dbReference type="ChEBI" id="CHEBI:57972"/>
        <dbReference type="ChEBI" id="CHEBI:78442"/>
        <dbReference type="ChEBI" id="CHEBI:78497"/>
        <dbReference type="ChEBI" id="CHEBI:456215"/>
        <dbReference type="EC" id="6.1.1.7"/>
    </reaction>
</comment>
<comment type="cofactor">
    <cofactor evidence="1">
        <name>Zn(2+)</name>
        <dbReference type="ChEBI" id="CHEBI:29105"/>
    </cofactor>
    <text evidence="1">Binds 1 zinc ion per subunit.</text>
</comment>
<comment type="subcellular location">
    <subcellularLocation>
        <location evidence="1">Cytoplasm</location>
    </subcellularLocation>
</comment>
<comment type="domain">
    <text evidence="1">Consists of three domains; the N-terminal catalytic domain, the editing domain and the C-terminal C-Ala domain. The editing domain removes incorrectly charged amino acids, while the C-Ala domain, along with tRNA(Ala), serves as a bridge to cooperatively bring together the editing and aminoacylation centers thus stimulating deacylation of misacylated tRNAs.</text>
</comment>
<comment type="similarity">
    <text evidence="1">Belongs to the class-II aminoacyl-tRNA synthetase family.</text>
</comment>
<dbReference type="EC" id="6.1.1.7" evidence="1"/>
<dbReference type="EMBL" id="CU234118">
    <property type="protein sequence ID" value="CAL78682.1"/>
    <property type="molecule type" value="Genomic_DNA"/>
</dbReference>
<dbReference type="RefSeq" id="WP_012028623.1">
    <property type="nucleotide sequence ID" value="NC_009445.1"/>
</dbReference>
<dbReference type="SMR" id="A4YXQ6"/>
<dbReference type="STRING" id="114615.BRADO4981"/>
<dbReference type="KEGG" id="bra:BRADO4981"/>
<dbReference type="eggNOG" id="COG0013">
    <property type="taxonomic scope" value="Bacteria"/>
</dbReference>
<dbReference type="HOGENOM" id="CLU_004485_1_1_5"/>
<dbReference type="OrthoDB" id="9803884at2"/>
<dbReference type="Proteomes" id="UP000001994">
    <property type="component" value="Chromosome"/>
</dbReference>
<dbReference type="GO" id="GO:0005829">
    <property type="term" value="C:cytosol"/>
    <property type="evidence" value="ECO:0007669"/>
    <property type="project" value="TreeGrafter"/>
</dbReference>
<dbReference type="GO" id="GO:0004813">
    <property type="term" value="F:alanine-tRNA ligase activity"/>
    <property type="evidence" value="ECO:0007669"/>
    <property type="project" value="UniProtKB-UniRule"/>
</dbReference>
<dbReference type="GO" id="GO:0002161">
    <property type="term" value="F:aminoacyl-tRNA deacylase activity"/>
    <property type="evidence" value="ECO:0007669"/>
    <property type="project" value="TreeGrafter"/>
</dbReference>
<dbReference type="GO" id="GO:0005524">
    <property type="term" value="F:ATP binding"/>
    <property type="evidence" value="ECO:0007669"/>
    <property type="project" value="UniProtKB-UniRule"/>
</dbReference>
<dbReference type="GO" id="GO:0000049">
    <property type="term" value="F:tRNA binding"/>
    <property type="evidence" value="ECO:0007669"/>
    <property type="project" value="UniProtKB-KW"/>
</dbReference>
<dbReference type="GO" id="GO:0008270">
    <property type="term" value="F:zinc ion binding"/>
    <property type="evidence" value="ECO:0007669"/>
    <property type="project" value="UniProtKB-UniRule"/>
</dbReference>
<dbReference type="GO" id="GO:0006419">
    <property type="term" value="P:alanyl-tRNA aminoacylation"/>
    <property type="evidence" value="ECO:0007669"/>
    <property type="project" value="UniProtKB-UniRule"/>
</dbReference>
<dbReference type="GO" id="GO:0045892">
    <property type="term" value="P:negative regulation of DNA-templated transcription"/>
    <property type="evidence" value="ECO:0007669"/>
    <property type="project" value="TreeGrafter"/>
</dbReference>
<dbReference type="CDD" id="cd00673">
    <property type="entry name" value="AlaRS_core"/>
    <property type="match status" value="1"/>
</dbReference>
<dbReference type="FunFam" id="2.40.30.130:FF:000001">
    <property type="entry name" value="Alanine--tRNA ligase"/>
    <property type="match status" value="1"/>
</dbReference>
<dbReference type="FunFam" id="3.10.310.40:FF:000001">
    <property type="entry name" value="Alanine--tRNA ligase"/>
    <property type="match status" value="1"/>
</dbReference>
<dbReference type="FunFam" id="3.30.54.20:FF:000001">
    <property type="entry name" value="Alanine--tRNA ligase"/>
    <property type="match status" value="1"/>
</dbReference>
<dbReference type="FunFam" id="3.30.930.10:FF:000004">
    <property type="entry name" value="Alanine--tRNA ligase"/>
    <property type="match status" value="1"/>
</dbReference>
<dbReference type="FunFam" id="3.30.980.10:FF:000004">
    <property type="entry name" value="Alanine--tRNA ligase, cytoplasmic"/>
    <property type="match status" value="1"/>
</dbReference>
<dbReference type="Gene3D" id="2.40.30.130">
    <property type="match status" value="1"/>
</dbReference>
<dbReference type="Gene3D" id="3.10.310.40">
    <property type="match status" value="1"/>
</dbReference>
<dbReference type="Gene3D" id="3.30.54.20">
    <property type="match status" value="1"/>
</dbReference>
<dbReference type="Gene3D" id="6.10.250.550">
    <property type="match status" value="1"/>
</dbReference>
<dbReference type="Gene3D" id="3.30.930.10">
    <property type="entry name" value="Bira Bifunctional Protein, Domain 2"/>
    <property type="match status" value="1"/>
</dbReference>
<dbReference type="Gene3D" id="3.30.980.10">
    <property type="entry name" value="Threonyl-trna Synthetase, Chain A, domain 2"/>
    <property type="match status" value="1"/>
</dbReference>
<dbReference type="HAMAP" id="MF_00036_B">
    <property type="entry name" value="Ala_tRNA_synth_B"/>
    <property type="match status" value="1"/>
</dbReference>
<dbReference type="InterPro" id="IPR045864">
    <property type="entry name" value="aa-tRNA-synth_II/BPL/LPL"/>
</dbReference>
<dbReference type="InterPro" id="IPR002318">
    <property type="entry name" value="Ala-tRNA-lgiase_IIc"/>
</dbReference>
<dbReference type="InterPro" id="IPR018162">
    <property type="entry name" value="Ala-tRNA-ligase_IIc_anticod-bd"/>
</dbReference>
<dbReference type="InterPro" id="IPR018165">
    <property type="entry name" value="Ala-tRNA-synth_IIc_core"/>
</dbReference>
<dbReference type="InterPro" id="IPR018164">
    <property type="entry name" value="Ala-tRNA-synth_IIc_N"/>
</dbReference>
<dbReference type="InterPro" id="IPR050058">
    <property type="entry name" value="Ala-tRNA_ligase"/>
</dbReference>
<dbReference type="InterPro" id="IPR023033">
    <property type="entry name" value="Ala_tRNA_ligase_euk/bac"/>
</dbReference>
<dbReference type="InterPro" id="IPR003156">
    <property type="entry name" value="DHHA1_dom"/>
</dbReference>
<dbReference type="InterPro" id="IPR018163">
    <property type="entry name" value="Thr/Ala-tRNA-synth_IIc_edit"/>
</dbReference>
<dbReference type="InterPro" id="IPR009000">
    <property type="entry name" value="Transl_B-barrel_sf"/>
</dbReference>
<dbReference type="InterPro" id="IPR012947">
    <property type="entry name" value="tRNA_SAD"/>
</dbReference>
<dbReference type="NCBIfam" id="TIGR00344">
    <property type="entry name" value="alaS"/>
    <property type="match status" value="1"/>
</dbReference>
<dbReference type="PANTHER" id="PTHR11777:SF9">
    <property type="entry name" value="ALANINE--TRNA LIGASE, CYTOPLASMIC"/>
    <property type="match status" value="1"/>
</dbReference>
<dbReference type="PANTHER" id="PTHR11777">
    <property type="entry name" value="ALANYL-TRNA SYNTHETASE"/>
    <property type="match status" value="1"/>
</dbReference>
<dbReference type="Pfam" id="PF02272">
    <property type="entry name" value="DHHA1"/>
    <property type="match status" value="1"/>
</dbReference>
<dbReference type="Pfam" id="PF01411">
    <property type="entry name" value="tRNA-synt_2c"/>
    <property type="match status" value="1"/>
</dbReference>
<dbReference type="Pfam" id="PF07973">
    <property type="entry name" value="tRNA_SAD"/>
    <property type="match status" value="1"/>
</dbReference>
<dbReference type="PRINTS" id="PR00980">
    <property type="entry name" value="TRNASYNTHALA"/>
</dbReference>
<dbReference type="SMART" id="SM00863">
    <property type="entry name" value="tRNA_SAD"/>
    <property type="match status" value="1"/>
</dbReference>
<dbReference type="SUPFAM" id="SSF55681">
    <property type="entry name" value="Class II aaRS and biotin synthetases"/>
    <property type="match status" value="1"/>
</dbReference>
<dbReference type="SUPFAM" id="SSF101353">
    <property type="entry name" value="Putative anticodon-binding domain of alanyl-tRNA synthetase (AlaRS)"/>
    <property type="match status" value="1"/>
</dbReference>
<dbReference type="SUPFAM" id="SSF55186">
    <property type="entry name" value="ThrRS/AlaRS common domain"/>
    <property type="match status" value="1"/>
</dbReference>
<dbReference type="SUPFAM" id="SSF50447">
    <property type="entry name" value="Translation proteins"/>
    <property type="match status" value="1"/>
</dbReference>
<dbReference type="PROSITE" id="PS50860">
    <property type="entry name" value="AA_TRNA_LIGASE_II_ALA"/>
    <property type="match status" value="1"/>
</dbReference>
<gene>
    <name evidence="1" type="primary">alaS</name>
    <name type="ordered locus">BRADO4981</name>
</gene>
<keyword id="KW-0030">Aminoacyl-tRNA synthetase</keyword>
<keyword id="KW-0067">ATP-binding</keyword>
<keyword id="KW-0963">Cytoplasm</keyword>
<keyword id="KW-0436">Ligase</keyword>
<keyword id="KW-0479">Metal-binding</keyword>
<keyword id="KW-0547">Nucleotide-binding</keyword>
<keyword id="KW-0648">Protein biosynthesis</keyword>
<keyword id="KW-1185">Reference proteome</keyword>
<keyword id="KW-0694">RNA-binding</keyword>
<keyword id="KW-0820">tRNA-binding</keyword>
<keyword id="KW-0862">Zinc</keyword>
<reference key="1">
    <citation type="journal article" date="2007" name="Science">
        <title>Legumes symbioses: absence of nod genes in photosynthetic bradyrhizobia.</title>
        <authorList>
            <person name="Giraud E."/>
            <person name="Moulin L."/>
            <person name="Vallenet D."/>
            <person name="Barbe V."/>
            <person name="Cytryn E."/>
            <person name="Avarre J.-C."/>
            <person name="Jaubert M."/>
            <person name="Simon D."/>
            <person name="Cartieaux F."/>
            <person name="Prin Y."/>
            <person name="Bena G."/>
            <person name="Hannibal L."/>
            <person name="Fardoux J."/>
            <person name="Kojadinovic M."/>
            <person name="Vuillet L."/>
            <person name="Lajus A."/>
            <person name="Cruveiller S."/>
            <person name="Rouy Z."/>
            <person name="Mangenot S."/>
            <person name="Segurens B."/>
            <person name="Dossat C."/>
            <person name="Franck W.L."/>
            <person name="Chang W.-S."/>
            <person name="Saunders E."/>
            <person name="Bruce D."/>
            <person name="Richardson P."/>
            <person name="Normand P."/>
            <person name="Dreyfus B."/>
            <person name="Pignol D."/>
            <person name="Stacey G."/>
            <person name="Emerich D."/>
            <person name="Vermeglio A."/>
            <person name="Medigue C."/>
            <person name="Sadowsky M."/>
        </authorList>
    </citation>
    <scope>NUCLEOTIDE SEQUENCE [LARGE SCALE GENOMIC DNA]</scope>
    <source>
        <strain>ORS 278</strain>
    </source>
</reference>
<protein>
    <recommendedName>
        <fullName evidence="1">Alanine--tRNA ligase</fullName>
        <ecNumber evidence="1">6.1.1.7</ecNumber>
    </recommendedName>
    <alternativeName>
        <fullName evidence="1">Alanyl-tRNA synthetase</fullName>
        <shortName evidence="1">AlaRS</shortName>
    </alternativeName>
</protein>
<sequence length="891" mass="95577">MSGVNEIRSTFLNFFAANGHEIVPSSPLVPRNDPTLMFTNAGMVQFKNVFTGVEKRPYHRATTSQKCVRAGGKHNDLDNVGYTARHHTFFEMLGNFSFGDYFKENAIELAWKLVTKEFGLPKDKLTATVYIDDDEAFGLWKKIAGLPESRIIRIAGSDNFWQMGDTGPCGPCSEIFYDHGDKIWGGPPGSAEADGDRFIEIWNLVFMQYEQLEGGVRNPLPKPSIDTGAGLERVAAVLQGKHDNYDIDLFVALIRAIADLTNADPQGPQKASLRVIADHLRASSFLISDGVLPSNEGRGYVLRRIMRRAMRHAQLLGAREPLMHKLVGALTREMGQAYPELIRAEGLIKETLRLEETRFRKTLERGLAILDEKSASLSKGDMFDGDVAFTLYDTYGFPLDLTQDALKSRGISVDQASFTDAMERQKAKARAAWAGSGEAATETVWFPLREKLGATEFLGYETETAEGAVTALVKDGAEVDSLKAGESGAIVLNQTPFYGESGGQVGDTGVLTGEGVRVRITDTQKKAGDLFAHIGTVEQGTLKLGTPLQLDVDHIRRSAIRANHSATHILHEALRQVLGDHIAQRGSLVSPDRLRFDFVHPKPITAEELARVEDIANDVVLENAEVTTRLMGLDDAREAGARALFGEKYGDEVRVVSMGNAARDHGNNAMGWSVELCGGTHVKRTGDIGLIAVTSESAVASGVRRIEALTARGARAHANHNLSLAKAAAAELRTTVDEVPARITALMEERKKLERELSDARKKLAMGGGAAAGGAAAGIREVAGIKLMARAVDGVEVKDLKSLVDEAKKQLGSGVVAIVGRSEDGKAGVVVGVTADLTARFNAVELVRAASEALGGKGGGGRPDMAQAGGPDGAKAEAALAAIESAIGKAG</sequence>
<feature type="chain" id="PRO_0000347513" description="Alanine--tRNA ligase">
    <location>
        <begin position="1"/>
        <end position="891"/>
    </location>
</feature>
<feature type="binding site" evidence="1">
    <location>
        <position position="564"/>
    </location>
    <ligand>
        <name>Zn(2+)</name>
        <dbReference type="ChEBI" id="CHEBI:29105"/>
    </ligand>
</feature>
<feature type="binding site" evidence="1">
    <location>
        <position position="568"/>
    </location>
    <ligand>
        <name>Zn(2+)</name>
        <dbReference type="ChEBI" id="CHEBI:29105"/>
    </ligand>
</feature>
<feature type="binding site" evidence="1">
    <location>
        <position position="677"/>
    </location>
    <ligand>
        <name>Zn(2+)</name>
        <dbReference type="ChEBI" id="CHEBI:29105"/>
    </ligand>
</feature>
<feature type="binding site" evidence="1">
    <location>
        <position position="681"/>
    </location>
    <ligand>
        <name>Zn(2+)</name>
        <dbReference type="ChEBI" id="CHEBI:29105"/>
    </ligand>
</feature>
<accession>A4YXQ6</accession>
<proteinExistence type="inferred from homology"/>
<organism>
    <name type="scientific">Bradyrhizobium sp. (strain ORS 278)</name>
    <dbReference type="NCBI Taxonomy" id="114615"/>
    <lineage>
        <taxon>Bacteria</taxon>
        <taxon>Pseudomonadati</taxon>
        <taxon>Pseudomonadota</taxon>
        <taxon>Alphaproteobacteria</taxon>
        <taxon>Hyphomicrobiales</taxon>
        <taxon>Nitrobacteraceae</taxon>
        <taxon>Bradyrhizobium</taxon>
    </lineage>
</organism>